<keyword id="KW-0233">DNA recombination</keyword>
<keyword id="KW-0238">DNA-binding</keyword>
<keyword id="KW-1185">Reference proteome</keyword>
<keyword id="KW-0814">Transposable element</keyword>
<keyword id="KW-0815">Transposition</keyword>
<reference key="1">
    <citation type="journal article" date="1994" name="Nucleic Acids Res.">
        <title>Analysis of the Escherichia coli genome. V. DNA sequence of the region from 76.0 to 81.5 minutes.</title>
        <authorList>
            <person name="Sofia H.J."/>
            <person name="Burland V."/>
            <person name="Daniels D.L."/>
            <person name="Plunkett G. III"/>
            <person name="Blattner F.R."/>
        </authorList>
    </citation>
    <scope>NUCLEOTIDE SEQUENCE [LARGE SCALE GENOMIC DNA]</scope>
    <source>
        <strain>K12 / MG1655 / ATCC 47076</strain>
    </source>
</reference>
<reference key="2">
    <citation type="journal article" date="1996" name="DNA Res.">
        <title>A 570-kb DNA sequence of the Escherichia coli K-12 genome corresponding to the 28.0-40.1 min region on the linkage map.</title>
        <authorList>
            <person name="Aiba H."/>
            <person name="Baba T."/>
            <person name="Fujita K."/>
            <person name="Hayashi K."/>
            <person name="Inada T."/>
            <person name="Isono K."/>
            <person name="Itoh T."/>
            <person name="Kasai H."/>
            <person name="Kashimoto K."/>
            <person name="Kimura S."/>
            <person name="Kitakawa M."/>
            <person name="Kitagawa M."/>
            <person name="Makino K."/>
            <person name="Miki T."/>
            <person name="Mizobuchi K."/>
            <person name="Mori H."/>
            <person name="Mori T."/>
            <person name="Motomura K."/>
            <person name="Nakade S."/>
            <person name="Nakamura Y."/>
            <person name="Nashimoto H."/>
            <person name="Nishio Y."/>
            <person name="Oshima T."/>
            <person name="Saito N."/>
            <person name="Sampei G."/>
            <person name="Seki Y."/>
            <person name="Sivasundaram S."/>
            <person name="Tagami H."/>
            <person name="Takeda J."/>
            <person name="Takemoto K."/>
            <person name="Takeuchi Y."/>
            <person name="Wada C."/>
            <person name="Yamamoto Y."/>
            <person name="Horiuchi T."/>
        </authorList>
    </citation>
    <scope>NUCLEOTIDE SEQUENCE [LARGE SCALE GENOMIC DNA]</scope>
    <source>
        <strain>K12 / W3110 / ATCC 27325 / DSM 5911</strain>
    </source>
</reference>
<reference key="3">
    <citation type="journal article" date="1996" name="DNA Res.">
        <title>A 460-kb DNA sequence of the Escherichia coli K-12 genome corresponding to the 40.1-50.0 min region on the linkage map.</title>
        <authorList>
            <person name="Itoh T."/>
            <person name="Aiba H."/>
            <person name="Baba T."/>
            <person name="Fujita K."/>
            <person name="Hayashi K."/>
            <person name="Inada T."/>
            <person name="Isono K."/>
            <person name="Kasai H."/>
            <person name="Kimura S."/>
            <person name="Kitakawa M."/>
            <person name="Kitagawa M."/>
            <person name="Makino K."/>
            <person name="Miki T."/>
            <person name="Mizobuchi K."/>
            <person name="Mori H."/>
            <person name="Mori T."/>
            <person name="Motomura K."/>
            <person name="Nakade S."/>
            <person name="Nakamura Y."/>
            <person name="Nashimoto H."/>
            <person name="Nishio Y."/>
            <person name="Oshima T."/>
            <person name="Saito N."/>
            <person name="Sampei G."/>
            <person name="Seki Y."/>
            <person name="Sivasundaram S."/>
            <person name="Tagami H."/>
            <person name="Takeda J."/>
            <person name="Takemoto K."/>
            <person name="Wada C."/>
            <person name="Yamamoto Y."/>
            <person name="Horiuchi T."/>
        </authorList>
    </citation>
    <scope>NUCLEOTIDE SEQUENCE [LARGE SCALE GENOMIC DNA]</scope>
    <source>
        <strain>K12 / W3110 / ATCC 27325 / DSM 5911</strain>
    </source>
</reference>
<reference key="4">
    <citation type="submission" date="1997-01" db="EMBL/GenBank/DDBJ databases">
        <title>Sequence of minutes 4-25 of Escherichia coli.</title>
        <authorList>
            <person name="Chung E."/>
            <person name="Allen E."/>
            <person name="Araujo R."/>
            <person name="Aparicio A.M."/>
            <person name="Davis K."/>
            <person name="Duncan M."/>
            <person name="Federspiel N."/>
            <person name="Hyman R."/>
            <person name="Kalman S."/>
            <person name="Komp C."/>
            <person name="Kurdi O."/>
            <person name="Lew H."/>
            <person name="Lin D."/>
            <person name="Namath A."/>
            <person name="Oefner P."/>
            <person name="Roberts D."/>
            <person name="Schramm S."/>
            <person name="Davis R.W."/>
        </authorList>
    </citation>
    <scope>NUCLEOTIDE SEQUENCE [LARGE SCALE GENOMIC DNA]</scope>
    <source>
        <strain>K12 / MG1655 / ATCC 47076</strain>
    </source>
</reference>
<reference key="5">
    <citation type="journal article" date="1997" name="Science">
        <title>The complete genome sequence of Escherichia coli K-12.</title>
        <authorList>
            <person name="Blattner F.R."/>
            <person name="Plunkett G. III"/>
            <person name="Bloch C.A."/>
            <person name="Perna N.T."/>
            <person name="Burland V."/>
            <person name="Riley M."/>
            <person name="Collado-Vides J."/>
            <person name="Glasner J.D."/>
            <person name="Rode C.K."/>
            <person name="Mayhew G.F."/>
            <person name="Gregor J."/>
            <person name="Davis N.W."/>
            <person name="Kirkpatrick H.A."/>
            <person name="Goeden M.A."/>
            <person name="Rose D.J."/>
            <person name="Mau B."/>
            <person name="Shao Y."/>
        </authorList>
    </citation>
    <scope>NUCLEOTIDE SEQUENCE [LARGE SCALE GENOMIC DNA]</scope>
    <source>
        <strain>K12 / MG1655 / ATCC 47076</strain>
    </source>
</reference>
<reference key="6">
    <citation type="journal article" date="2006" name="Mol. Syst. Biol.">
        <title>Highly accurate genome sequences of Escherichia coli K-12 strains MG1655 and W3110.</title>
        <authorList>
            <person name="Hayashi K."/>
            <person name="Morooka N."/>
            <person name="Yamamoto Y."/>
            <person name="Fujita K."/>
            <person name="Isono K."/>
            <person name="Choi S."/>
            <person name="Ohtsubo E."/>
            <person name="Baba T."/>
            <person name="Wanner B.L."/>
            <person name="Mori H."/>
            <person name="Horiuchi T."/>
        </authorList>
    </citation>
    <scope>NUCLEOTIDE SEQUENCE [LARGE SCALE GENOMIC DNA]</scope>
    <source>
        <strain>K12 / W3110 / ATCC 27325 / DSM 5911</strain>
    </source>
</reference>
<dbReference type="EMBL" id="U00096">
    <property type="protein sequence ID" value="AAC73653.2"/>
    <property type="molecule type" value="Genomic_DNA"/>
</dbReference>
<dbReference type="EMBL" id="AP009048">
    <property type="protein sequence ID" value="BAE76328.1"/>
    <property type="status" value="ALT_INIT"/>
    <property type="molecule type" value="Genomic_DNA"/>
</dbReference>
<dbReference type="RefSeq" id="NP_414793.1">
    <property type="nucleotide sequence ID" value="NC_000913.3"/>
</dbReference>
<dbReference type="RefSeq" id="NP_415084.1">
    <property type="nucleotide sequence ID" value="NC_000913.3"/>
</dbReference>
<dbReference type="RefSeq" id="NP_415189.1">
    <property type="nucleotide sequence ID" value="NC_000913.3"/>
</dbReference>
<dbReference type="RefSeq" id="NP_415847.1">
    <property type="nucleotide sequence ID" value="NC_000913.3"/>
</dbReference>
<dbReference type="RefSeq" id="NP_416535.1">
    <property type="nucleotide sequence ID" value="NC_000913.3"/>
</dbReference>
<dbReference type="RefSeq" id="NP_416696.1">
    <property type="nucleotide sequence ID" value="NC_000913.3"/>
</dbReference>
<dbReference type="RefSeq" id="NP_417456.1">
    <property type="nucleotide sequence ID" value="NC_000913.3"/>
</dbReference>
<dbReference type="RefSeq" id="NP_417685.1">
    <property type="nucleotide sequence ID" value="NC_000913.3"/>
</dbReference>
<dbReference type="RefSeq" id="NP_417962.1">
    <property type="nucleotide sequence ID" value="NC_000913.3"/>
</dbReference>
<dbReference type="RefSeq" id="WP_000019403.1">
    <property type="nucleotide sequence ID" value="NZ_SSZK01000120.1"/>
</dbReference>
<dbReference type="FunCoup" id="P0CE50">
    <property type="interactions" value="11"/>
</dbReference>
<dbReference type="jPOST" id="P0CE50"/>
<dbReference type="EnsemblBacteria" id="AAC73653">
    <property type="protein sequence ID" value="AAC73653"/>
    <property type="gene ID" value="b0552"/>
</dbReference>
<dbReference type="GeneID" id="946163"/>
<dbReference type="KEGG" id="ecj:JW0540"/>
<dbReference type="KEGG" id="eco:b0259"/>
<dbReference type="KEGG" id="eco:b0552"/>
<dbReference type="KEGG" id="eco:b0656"/>
<dbReference type="KEGG" id="eco:b2030"/>
<dbReference type="KEGG" id="eco:b2192"/>
<dbReference type="KEGG" id="eco:b2982"/>
<dbReference type="KEGG" id="eco:b3218"/>
<dbReference type="KEGG" id="eco:b3505"/>
<dbReference type="KEGG" id="eco:b4711"/>
<dbReference type="KEGG" id="ecoc:C3026_01250"/>
<dbReference type="KEGG" id="ecoc:C3026_02730"/>
<dbReference type="KEGG" id="ecoc:C3026_03280"/>
<dbReference type="KEGG" id="ecoc:C3026_07795"/>
<dbReference type="KEGG" id="ecoc:C3026_10760"/>
<dbReference type="KEGG" id="ecoc:C3026_11440"/>
<dbReference type="KEGG" id="ecoc:C3026_12250"/>
<dbReference type="KEGG" id="ecoc:C3026_16315"/>
<dbReference type="KEGG" id="ecoc:C3026_17505"/>
<dbReference type="KEGG" id="ecoc:C3026_18985"/>
<dbReference type="KEGG" id="ecoc:C3026_23975"/>
<dbReference type="EchoBASE" id="EB4717"/>
<dbReference type="HOGENOM" id="CLU_049873_1_2_6"/>
<dbReference type="InParanoid" id="P0CE50"/>
<dbReference type="PhylomeDB" id="P0CE50"/>
<dbReference type="BioCyc" id="EcoCyc:MONOMER0-4234"/>
<dbReference type="PRO" id="PR:P0CE50"/>
<dbReference type="Proteomes" id="UP000000625">
    <property type="component" value="Chromosome"/>
</dbReference>
<dbReference type="GO" id="GO:0005829">
    <property type="term" value="C:cytosol"/>
    <property type="evidence" value="ECO:0000318"/>
    <property type="project" value="GO_Central"/>
</dbReference>
<dbReference type="GO" id="GO:0003677">
    <property type="term" value="F:DNA binding"/>
    <property type="evidence" value="ECO:0007669"/>
    <property type="project" value="UniProtKB-KW"/>
</dbReference>
<dbReference type="GO" id="GO:0004803">
    <property type="term" value="F:transposase activity"/>
    <property type="evidence" value="ECO:0000318"/>
    <property type="project" value="GO_Central"/>
</dbReference>
<dbReference type="GO" id="GO:0006313">
    <property type="term" value="P:DNA transposition"/>
    <property type="evidence" value="ECO:0000318"/>
    <property type="project" value="GO_Central"/>
</dbReference>
<dbReference type="InterPro" id="IPR047959">
    <property type="entry name" value="Transpos_IS5"/>
</dbReference>
<dbReference type="InterPro" id="IPR002559">
    <property type="entry name" value="Transposase_11"/>
</dbReference>
<dbReference type="InterPro" id="IPR008490">
    <property type="entry name" value="Transposase_InsH_N"/>
</dbReference>
<dbReference type="NCBIfam" id="NF033581">
    <property type="entry name" value="transpos_IS5_4"/>
    <property type="match status" value="1"/>
</dbReference>
<dbReference type="PANTHER" id="PTHR35604">
    <property type="entry name" value="TRANSPOSASE INSH FOR INSERTION SEQUENCE ELEMENT IS5A-RELATED"/>
    <property type="match status" value="1"/>
</dbReference>
<dbReference type="PANTHER" id="PTHR35604:SF2">
    <property type="entry name" value="TRANSPOSASE INSH FOR INSERTION SEQUENCE ELEMENT IS5A-RELATED"/>
    <property type="match status" value="1"/>
</dbReference>
<dbReference type="Pfam" id="PF01609">
    <property type="entry name" value="DDE_Tnp_1"/>
    <property type="match status" value="1"/>
</dbReference>
<dbReference type="Pfam" id="PF05598">
    <property type="entry name" value="DUF772"/>
    <property type="match status" value="1"/>
</dbReference>
<organism>
    <name type="scientific">Escherichia coli (strain K12)</name>
    <dbReference type="NCBI Taxonomy" id="83333"/>
    <lineage>
        <taxon>Bacteria</taxon>
        <taxon>Pseudomonadati</taxon>
        <taxon>Pseudomonadota</taxon>
        <taxon>Gammaproteobacteria</taxon>
        <taxon>Enterobacterales</taxon>
        <taxon>Enterobacteriaceae</taxon>
        <taxon>Escherichia</taxon>
    </lineage>
</organism>
<accession>P0CE50</accession>
<accession>O07987</accession>
<accession>O07988</accession>
<accession>P03837</accession>
<accession>P76355</accession>
<accession>Q2MBK1</accession>
<accession>Q2MBM8</accession>
<evidence type="ECO:0000305" key="1"/>
<proteinExistence type="inferred from homology"/>
<gene>
    <name type="primary">insH2</name>
    <name type="ordered locus">b0552</name>
    <name type="ordered locus">JW0540</name>
</gene>
<feature type="chain" id="PRO_0000392481" description="Transposase InsH for insertion sequence element IS5B">
    <location>
        <begin position="1"/>
        <end position="326"/>
    </location>
</feature>
<comment type="function">
    <text>Involved in the transposition of the insertion sequence IS5.</text>
</comment>
<comment type="similarity">
    <text evidence="1">Belongs to the transposase 11 family.</text>
</comment>
<comment type="sequence caution" evidence="1">
    <conflict type="erroneous initiation">
        <sequence resource="EMBL-CDS" id="BAE76328"/>
    </conflict>
    <text>Extended N-terminus.</text>
</comment>
<protein>
    <recommendedName>
        <fullName>Transposase InsH for insertion sequence element IS5B</fullName>
    </recommendedName>
</protein>
<sequence length="326" mass="37851">MSHQLTFADSEFSSKRRQTRKEIFLSRMEQILPWQNMVEVIEPFYPKAGNGRRPYPLETMLRIHCMQHWYNLSDGAMEDALYEIASMRLFARLSLDSALPDRTTIMNFRHLLEQHQLARQLFKTINRWLAEAGVMMTQGTLVDATIIEAPSSTKNKEQQRDPEMHQTKKGNQWHFGMKAHIGVDAKSGLTHSLVTTAANEHDLNQLGNLLHGEEQFVSADAGYQGAPQREELAEVDVDWLIAERPGKVRTLKQHPRKNKTAINIEYMKASIRARVEHPFRIIKRQFGFVKARYKGLLKNDNQLAMLFTLANLFRADQMIRQWERSH</sequence>
<name>INSH2_ECOLI</name>